<reference key="1">
    <citation type="journal article" date="2001" name="Nature">
        <title>Genome sequence of enterohaemorrhagic Escherichia coli O157:H7.</title>
        <authorList>
            <person name="Perna N.T."/>
            <person name="Plunkett G. III"/>
            <person name="Burland V."/>
            <person name="Mau B."/>
            <person name="Glasner J.D."/>
            <person name="Rose D.J."/>
            <person name="Mayhew G.F."/>
            <person name="Evans P.S."/>
            <person name="Gregor J."/>
            <person name="Kirkpatrick H.A."/>
            <person name="Posfai G."/>
            <person name="Hackett J."/>
            <person name="Klink S."/>
            <person name="Boutin A."/>
            <person name="Shao Y."/>
            <person name="Miller L."/>
            <person name="Grotbeck E.J."/>
            <person name="Davis N.W."/>
            <person name="Lim A."/>
            <person name="Dimalanta E.T."/>
            <person name="Potamousis K."/>
            <person name="Apodaca J."/>
            <person name="Anantharaman T.S."/>
            <person name="Lin J."/>
            <person name="Yen G."/>
            <person name="Schwartz D.C."/>
            <person name="Welch R.A."/>
            <person name="Blattner F.R."/>
        </authorList>
    </citation>
    <scope>NUCLEOTIDE SEQUENCE [LARGE SCALE GENOMIC DNA]</scope>
    <source>
        <strain>O157:H7 / EDL933 / ATCC 700927 / EHEC</strain>
    </source>
</reference>
<reference key="2">
    <citation type="journal article" date="2001" name="DNA Res.">
        <title>Complete genome sequence of enterohemorrhagic Escherichia coli O157:H7 and genomic comparison with a laboratory strain K-12.</title>
        <authorList>
            <person name="Hayashi T."/>
            <person name="Makino K."/>
            <person name="Ohnishi M."/>
            <person name="Kurokawa K."/>
            <person name="Ishii K."/>
            <person name="Yokoyama K."/>
            <person name="Han C.-G."/>
            <person name="Ohtsubo E."/>
            <person name="Nakayama K."/>
            <person name="Murata T."/>
            <person name="Tanaka M."/>
            <person name="Tobe T."/>
            <person name="Iida T."/>
            <person name="Takami H."/>
            <person name="Honda T."/>
            <person name="Sasakawa C."/>
            <person name="Ogasawara N."/>
            <person name="Yasunaga T."/>
            <person name="Kuhara S."/>
            <person name="Shiba T."/>
            <person name="Hattori M."/>
            <person name="Shinagawa H."/>
        </authorList>
    </citation>
    <scope>NUCLEOTIDE SEQUENCE [LARGE SCALE GENOMIC DNA]</scope>
    <source>
        <strain>O157:H7 / Sakai / RIMD 0509952 / EHEC</strain>
    </source>
</reference>
<name>FRLA_ECO57</name>
<feature type="chain" id="PRO_0000054248" description="Probable fructoselysine/psicoselysine transporter FrlA">
    <location>
        <begin position="1"/>
        <end position="445"/>
    </location>
</feature>
<feature type="transmembrane region" description="Helical" evidence="2">
    <location>
        <begin position="10"/>
        <end position="32"/>
    </location>
</feature>
<feature type="transmembrane region" description="Helical" evidence="2">
    <location>
        <begin position="39"/>
        <end position="61"/>
    </location>
</feature>
<feature type="transmembrane region" description="Helical" evidence="2">
    <location>
        <begin position="97"/>
        <end position="119"/>
    </location>
</feature>
<feature type="transmembrane region" description="Helical" evidence="2">
    <location>
        <begin position="126"/>
        <end position="143"/>
    </location>
</feature>
<feature type="transmembrane region" description="Helical" evidence="2">
    <location>
        <begin position="153"/>
        <end position="175"/>
    </location>
</feature>
<feature type="transmembrane region" description="Helical" evidence="2">
    <location>
        <begin position="188"/>
        <end position="210"/>
    </location>
</feature>
<feature type="transmembrane region" description="Helical" evidence="2">
    <location>
        <begin position="230"/>
        <end position="252"/>
    </location>
</feature>
<feature type="transmembrane region" description="Helical" evidence="2">
    <location>
        <begin position="272"/>
        <end position="294"/>
    </location>
</feature>
<feature type="transmembrane region" description="Helical" evidence="2">
    <location>
        <begin position="341"/>
        <end position="363"/>
    </location>
</feature>
<feature type="transmembrane region" description="Helical" evidence="2">
    <location>
        <begin position="384"/>
        <end position="406"/>
    </location>
</feature>
<feature type="transmembrane region" description="Helical" evidence="2">
    <location>
        <begin position="411"/>
        <end position="433"/>
    </location>
</feature>
<proteinExistence type="inferred from homology"/>
<comment type="function">
    <text evidence="1">Is likely involved in the transport of fructoselysine and psicoselysine to the cytoplasm, where they are degraded.</text>
</comment>
<comment type="catalytic activity">
    <reaction evidence="1">
        <text>N(6)-(D-fructosyl)-L-lysine(in) = N(6)-(D-fructosyl)-L-lysine(out)</text>
        <dbReference type="Rhea" id="RHEA:28454"/>
        <dbReference type="ChEBI" id="CHEBI:61393"/>
    </reaction>
    <physiologicalReaction direction="right-to-left" evidence="1">
        <dbReference type="Rhea" id="RHEA:28456"/>
    </physiologicalReaction>
</comment>
<comment type="catalytic activity">
    <reaction evidence="1">
        <text>N(6)-(D-psicosyl)-L-lysine(in) = N(6)-(D-psicosyl)-L-lysine(out)</text>
        <dbReference type="Rhea" id="RHEA:28450"/>
        <dbReference type="ChEBI" id="CHEBI:61403"/>
    </reaction>
    <physiologicalReaction direction="right-to-left" evidence="1">
        <dbReference type="Rhea" id="RHEA:28452"/>
    </physiologicalReaction>
</comment>
<comment type="pathway">
    <text evidence="1">Carbohydrate metabolism; fructoselysine degradation.</text>
</comment>
<comment type="subcellular location">
    <subcellularLocation>
        <location evidence="1">Cell inner membrane</location>
        <topology evidence="2">Multi-pass membrane protein</topology>
    </subcellularLocation>
</comment>
<comment type="similarity">
    <text evidence="3">Belongs to the amino acid-polyamine-organocation (APC) superfamily.</text>
</comment>
<comment type="sequence caution" evidence="3">
    <conflict type="erroneous initiation">
        <sequence resource="EMBL-CDS" id="AAG58478"/>
    </conflict>
    <text>Extended N-terminus.</text>
</comment>
<protein>
    <recommendedName>
        <fullName evidence="1">Probable fructoselysine/psicoselysine transporter FrlA</fullName>
    </recommendedName>
</protein>
<sequence>MGSQELQRKLGFWAVLAIAVGTTVGSGIFVSVGEVAKAAGTPWLTVLAFVIGGLIVIPQMCVYAELSTAYPENGADYVYLKNAGSRPLAFLSGWASFWANDAPSLSIMALAIVSNLGFLTPIDPLLGKFIAAGLIIAFMLLHLRSVEGGAAFQTLITIAKIIPFTIVIGLGIFWFKAENFAAPATTAIGATGSFMALLAGISATSWSYTGMASICYMTGEIKNPGKTMPRALIGSCLLVLVLYTLLALVISGLMPFDKLANSETPISDALTWIPALGSTAGIFVAITAMIVILGSLSSCVMYQPRLEYAMAKDNLFFKCFGHVHPKYNTPDVSIILQGALGIFFIFVSDLTSLLGYFTLVMCFKNTLTFGSIIWCRKRDDYKPLWRTPAFGLMTPLAIASSLILVASTFVWAPIPGLICAVIVIATGLPAYAFWAKRSRQLNALS</sequence>
<keyword id="KW-0029">Amino-acid transport</keyword>
<keyword id="KW-0997">Cell inner membrane</keyword>
<keyword id="KW-1003">Cell membrane</keyword>
<keyword id="KW-0472">Membrane</keyword>
<keyword id="KW-1185">Reference proteome</keyword>
<keyword id="KW-0812">Transmembrane</keyword>
<keyword id="KW-1133">Transmembrane helix</keyword>
<keyword id="KW-0813">Transport</keyword>
<dbReference type="EMBL" id="AE005174">
    <property type="protein sequence ID" value="AAG58478.1"/>
    <property type="status" value="ALT_INIT"/>
    <property type="molecule type" value="Genomic_DNA"/>
</dbReference>
<dbReference type="EMBL" id="BA000007">
    <property type="protein sequence ID" value="BAB37644.2"/>
    <property type="molecule type" value="Genomic_DNA"/>
</dbReference>
<dbReference type="PIR" id="B86002">
    <property type="entry name" value="B86002"/>
</dbReference>
<dbReference type="PIR" id="E91156">
    <property type="entry name" value="E91156"/>
</dbReference>
<dbReference type="RefSeq" id="NP_312248.2">
    <property type="nucleotide sequence ID" value="NC_002695.1"/>
</dbReference>
<dbReference type="RefSeq" id="WP_000535494.1">
    <property type="nucleotide sequence ID" value="NZ_VOAI01000004.1"/>
</dbReference>
<dbReference type="SMR" id="Q8X845"/>
<dbReference type="STRING" id="155864.Z4731"/>
<dbReference type="GeneID" id="915924"/>
<dbReference type="KEGG" id="ece:Z4731"/>
<dbReference type="KEGG" id="ecs:ECs_4221"/>
<dbReference type="PATRIC" id="fig|386585.9.peg.4406"/>
<dbReference type="eggNOG" id="COG0531">
    <property type="taxonomic scope" value="Bacteria"/>
</dbReference>
<dbReference type="HOGENOM" id="CLU_007946_3_4_6"/>
<dbReference type="OMA" id="TYWVISF"/>
<dbReference type="UniPathway" id="UPA00784"/>
<dbReference type="Proteomes" id="UP000000558">
    <property type="component" value="Chromosome"/>
</dbReference>
<dbReference type="Proteomes" id="UP000002519">
    <property type="component" value="Chromosome"/>
</dbReference>
<dbReference type="GO" id="GO:0005886">
    <property type="term" value="C:plasma membrane"/>
    <property type="evidence" value="ECO:0007669"/>
    <property type="project" value="UniProtKB-SubCell"/>
</dbReference>
<dbReference type="GO" id="GO:0015179">
    <property type="term" value="F:L-amino acid transmembrane transporter activity"/>
    <property type="evidence" value="ECO:0007669"/>
    <property type="project" value="TreeGrafter"/>
</dbReference>
<dbReference type="FunFam" id="1.20.1740.10:FF:000048">
    <property type="entry name" value="Fructoselysine transporter frlA"/>
    <property type="match status" value="1"/>
</dbReference>
<dbReference type="Gene3D" id="1.20.1740.10">
    <property type="entry name" value="Amino acid/polyamine transporter I"/>
    <property type="match status" value="1"/>
</dbReference>
<dbReference type="InterPro" id="IPR002293">
    <property type="entry name" value="AA/rel_permease1"/>
</dbReference>
<dbReference type="InterPro" id="IPR050598">
    <property type="entry name" value="AminoAcid_Transporter"/>
</dbReference>
<dbReference type="NCBIfam" id="NF008466">
    <property type="entry name" value="PRK11357.1"/>
    <property type="match status" value="1"/>
</dbReference>
<dbReference type="PANTHER" id="PTHR11785">
    <property type="entry name" value="AMINO ACID TRANSPORTER"/>
    <property type="match status" value="1"/>
</dbReference>
<dbReference type="PANTHER" id="PTHR11785:SF512">
    <property type="entry name" value="SOBREMESA, ISOFORM B"/>
    <property type="match status" value="1"/>
</dbReference>
<dbReference type="Pfam" id="PF13520">
    <property type="entry name" value="AA_permease_2"/>
    <property type="match status" value="1"/>
</dbReference>
<dbReference type="PIRSF" id="PIRSF006060">
    <property type="entry name" value="AA_transporter"/>
    <property type="match status" value="1"/>
</dbReference>
<evidence type="ECO:0000250" key="1">
    <source>
        <dbReference type="UniProtKB" id="P45539"/>
    </source>
</evidence>
<evidence type="ECO:0000255" key="2"/>
<evidence type="ECO:0000305" key="3"/>
<accession>Q8X845</accession>
<organism>
    <name type="scientific">Escherichia coli O157:H7</name>
    <dbReference type="NCBI Taxonomy" id="83334"/>
    <lineage>
        <taxon>Bacteria</taxon>
        <taxon>Pseudomonadati</taxon>
        <taxon>Pseudomonadota</taxon>
        <taxon>Gammaproteobacteria</taxon>
        <taxon>Enterobacterales</taxon>
        <taxon>Enterobacteriaceae</taxon>
        <taxon>Escherichia</taxon>
    </lineage>
</organism>
<gene>
    <name type="primary">frlA</name>
    <name type="ordered locus">Z4731</name>
    <name type="ordered locus">ECs4221</name>
</gene>